<organism>
    <name type="scientific">Edwardsiella ictaluri (strain 93-146)</name>
    <dbReference type="NCBI Taxonomy" id="634503"/>
    <lineage>
        <taxon>Bacteria</taxon>
        <taxon>Pseudomonadati</taxon>
        <taxon>Pseudomonadota</taxon>
        <taxon>Gammaproteobacteria</taxon>
        <taxon>Enterobacterales</taxon>
        <taxon>Hafniaceae</taxon>
        <taxon>Edwardsiella</taxon>
    </lineage>
</organism>
<reference key="1">
    <citation type="submission" date="2009-03" db="EMBL/GenBank/DDBJ databases">
        <title>Complete genome sequence of Edwardsiella ictaluri 93-146.</title>
        <authorList>
            <person name="Williams M.L."/>
            <person name="Gillaspy A.F."/>
            <person name="Dyer D.W."/>
            <person name="Thune R.L."/>
            <person name="Waldbieser G.C."/>
            <person name="Schuster S.C."/>
            <person name="Gipson J."/>
            <person name="Zaitshik J."/>
            <person name="Landry C."/>
            <person name="Lawrence M.L."/>
        </authorList>
    </citation>
    <scope>NUCLEOTIDE SEQUENCE [LARGE SCALE GENOMIC DNA]</scope>
    <source>
        <strain>93-146</strain>
    </source>
</reference>
<protein>
    <recommendedName>
        <fullName evidence="1">tRNA N6-adenosine threonylcarbamoyltransferase</fullName>
        <ecNumber evidence="1">2.3.1.234</ecNumber>
    </recommendedName>
    <alternativeName>
        <fullName evidence="1">N6-L-threonylcarbamoyladenine synthase</fullName>
        <shortName evidence="1">t(6)A synthase</shortName>
    </alternativeName>
    <alternativeName>
        <fullName evidence="1">t(6)A37 threonylcarbamoyladenosine biosynthesis protein TsaD</fullName>
    </alternativeName>
    <alternativeName>
        <fullName evidence="1">tRNA threonylcarbamoyladenosine biosynthesis protein TsaD</fullName>
    </alternativeName>
</protein>
<dbReference type="EC" id="2.3.1.234" evidence="1"/>
<dbReference type="EMBL" id="CP001600">
    <property type="protein sequence ID" value="ACR67760.1"/>
    <property type="molecule type" value="Genomic_DNA"/>
</dbReference>
<dbReference type="RefSeq" id="WP_015869960.1">
    <property type="nucleotide sequence ID" value="NZ_CP169062.1"/>
</dbReference>
<dbReference type="SMR" id="C5BHG1"/>
<dbReference type="STRING" id="67780.B6E78_13365"/>
<dbReference type="GeneID" id="69537608"/>
<dbReference type="KEGG" id="eic:NT01EI_0527"/>
<dbReference type="PATRIC" id="fig|634503.3.peg.477"/>
<dbReference type="HOGENOM" id="CLU_023208_0_0_6"/>
<dbReference type="OrthoDB" id="9806197at2"/>
<dbReference type="Proteomes" id="UP000001485">
    <property type="component" value="Chromosome"/>
</dbReference>
<dbReference type="GO" id="GO:0005737">
    <property type="term" value="C:cytoplasm"/>
    <property type="evidence" value="ECO:0007669"/>
    <property type="project" value="UniProtKB-SubCell"/>
</dbReference>
<dbReference type="GO" id="GO:0005506">
    <property type="term" value="F:iron ion binding"/>
    <property type="evidence" value="ECO:0007669"/>
    <property type="project" value="UniProtKB-UniRule"/>
</dbReference>
<dbReference type="GO" id="GO:0061711">
    <property type="term" value="F:N(6)-L-threonylcarbamoyladenine synthase activity"/>
    <property type="evidence" value="ECO:0007669"/>
    <property type="project" value="UniProtKB-EC"/>
</dbReference>
<dbReference type="GO" id="GO:0002949">
    <property type="term" value="P:tRNA threonylcarbamoyladenosine modification"/>
    <property type="evidence" value="ECO:0007669"/>
    <property type="project" value="UniProtKB-UniRule"/>
</dbReference>
<dbReference type="CDD" id="cd24133">
    <property type="entry name" value="ASKHA_NBD_TsaD_bac"/>
    <property type="match status" value="1"/>
</dbReference>
<dbReference type="FunFam" id="3.30.420.40:FF:000031">
    <property type="entry name" value="tRNA N6-adenosine threonylcarbamoyltransferase"/>
    <property type="match status" value="1"/>
</dbReference>
<dbReference type="Gene3D" id="3.30.420.40">
    <property type="match status" value="2"/>
</dbReference>
<dbReference type="HAMAP" id="MF_01445">
    <property type="entry name" value="TsaD"/>
    <property type="match status" value="1"/>
</dbReference>
<dbReference type="InterPro" id="IPR043129">
    <property type="entry name" value="ATPase_NBD"/>
</dbReference>
<dbReference type="InterPro" id="IPR000905">
    <property type="entry name" value="Gcp-like_dom"/>
</dbReference>
<dbReference type="InterPro" id="IPR017861">
    <property type="entry name" value="KAE1/TsaD"/>
</dbReference>
<dbReference type="InterPro" id="IPR017860">
    <property type="entry name" value="Peptidase_M22_CS"/>
</dbReference>
<dbReference type="InterPro" id="IPR022450">
    <property type="entry name" value="TsaD"/>
</dbReference>
<dbReference type="NCBIfam" id="TIGR00329">
    <property type="entry name" value="gcp_kae1"/>
    <property type="match status" value="1"/>
</dbReference>
<dbReference type="NCBIfam" id="TIGR03723">
    <property type="entry name" value="T6A_TsaD_YgjD"/>
    <property type="match status" value="1"/>
</dbReference>
<dbReference type="PANTHER" id="PTHR11735">
    <property type="entry name" value="TRNA N6-ADENOSINE THREONYLCARBAMOYLTRANSFERASE"/>
    <property type="match status" value="1"/>
</dbReference>
<dbReference type="PANTHER" id="PTHR11735:SF6">
    <property type="entry name" value="TRNA N6-ADENOSINE THREONYLCARBAMOYLTRANSFERASE, MITOCHONDRIAL"/>
    <property type="match status" value="1"/>
</dbReference>
<dbReference type="Pfam" id="PF00814">
    <property type="entry name" value="TsaD"/>
    <property type="match status" value="1"/>
</dbReference>
<dbReference type="PRINTS" id="PR00789">
    <property type="entry name" value="OSIALOPTASE"/>
</dbReference>
<dbReference type="SUPFAM" id="SSF53067">
    <property type="entry name" value="Actin-like ATPase domain"/>
    <property type="match status" value="1"/>
</dbReference>
<dbReference type="PROSITE" id="PS01016">
    <property type="entry name" value="GLYCOPROTEASE"/>
    <property type="match status" value="1"/>
</dbReference>
<comment type="function">
    <text evidence="1">Required for the formation of a threonylcarbamoyl group on adenosine at position 37 (t(6)A37) in tRNAs that read codons beginning with adenine. Is involved in the transfer of the threonylcarbamoyl moiety of threonylcarbamoyl-AMP (TC-AMP) to the N6 group of A37, together with TsaE and TsaB. TsaD likely plays a direct catalytic role in this reaction.</text>
</comment>
<comment type="catalytic activity">
    <reaction evidence="1">
        <text>L-threonylcarbamoyladenylate + adenosine(37) in tRNA = N(6)-L-threonylcarbamoyladenosine(37) in tRNA + AMP + H(+)</text>
        <dbReference type="Rhea" id="RHEA:37059"/>
        <dbReference type="Rhea" id="RHEA-COMP:10162"/>
        <dbReference type="Rhea" id="RHEA-COMP:10163"/>
        <dbReference type="ChEBI" id="CHEBI:15378"/>
        <dbReference type="ChEBI" id="CHEBI:73682"/>
        <dbReference type="ChEBI" id="CHEBI:74411"/>
        <dbReference type="ChEBI" id="CHEBI:74418"/>
        <dbReference type="ChEBI" id="CHEBI:456215"/>
        <dbReference type="EC" id="2.3.1.234"/>
    </reaction>
</comment>
<comment type="cofactor">
    <cofactor evidence="1">
        <name>Fe(2+)</name>
        <dbReference type="ChEBI" id="CHEBI:29033"/>
    </cofactor>
    <text evidence="1">Binds 1 Fe(2+) ion per subunit.</text>
</comment>
<comment type="subcellular location">
    <subcellularLocation>
        <location evidence="1">Cytoplasm</location>
    </subcellularLocation>
</comment>
<comment type="similarity">
    <text evidence="1">Belongs to the KAE1 / TsaD family.</text>
</comment>
<keyword id="KW-0012">Acyltransferase</keyword>
<keyword id="KW-0963">Cytoplasm</keyword>
<keyword id="KW-0408">Iron</keyword>
<keyword id="KW-0479">Metal-binding</keyword>
<keyword id="KW-0808">Transferase</keyword>
<keyword id="KW-0819">tRNA processing</keyword>
<sequence>MRILGIETSCDETGIAIYDDEKGILANQLYSQIKLHADYGGVVPELASRDHVRKTVPLIQAALREADLTPADLDGVAYTAGPGLVGALLVGATVGRSLAFAWGVPAVPVHHMEGHLLAPMLEENPPAFPFVALLVSGGHTQLISVTGIGEYRLLGESIDDAAGEAFDKTAKLLGLDYPGGPVLSRMAQQGVPGRFVFPRPMTDRPGLDLSFSGLKTFAANTIHANGDDAQTRADIARAFEDAVVDTLAIKCRRALDQTGFQRLVMAGGVSANRALRGRLAQMMQQRGGAVFYARPEFCTDNGAMIAYAGMVRLKSGVDADLSISVRPRWPLAELPPVAARS</sequence>
<proteinExistence type="inferred from homology"/>
<accession>C5BHG1</accession>
<feature type="chain" id="PRO_1000215299" description="tRNA N6-adenosine threonylcarbamoyltransferase">
    <location>
        <begin position="1"/>
        <end position="341"/>
    </location>
</feature>
<feature type="binding site" evidence="1">
    <location>
        <position position="111"/>
    </location>
    <ligand>
        <name>Fe cation</name>
        <dbReference type="ChEBI" id="CHEBI:24875"/>
    </ligand>
</feature>
<feature type="binding site" evidence="1">
    <location>
        <position position="115"/>
    </location>
    <ligand>
        <name>Fe cation</name>
        <dbReference type="ChEBI" id="CHEBI:24875"/>
    </ligand>
</feature>
<feature type="binding site" evidence="1">
    <location>
        <begin position="134"/>
        <end position="138"/>
    </location>
    <ligand>
        <name>substrate</name>
    </ligand>
</feature>
<feature type="binding site" evidence="1">
    <location>
        <position position="167"/>
    </location>
    <ligand>
        <name>substrate</name>
    </ligand>
</feature>
<feature type="binding site" evidence="1">
    <location>
        <position position="180"/>
    </location>
    <ligand>
        <name>substrate</name>
    </ligand>
</feature>
<feature type="binding site" evidence="1">
    <location>
        <position position="272"/>
    </location>
    <ligand>
        <name>substrate</name>
    </ligand>
</feature>
<feature type="binding site" evidence="1">
    <location>
        <position position="300"/>
    </location>
    <ligand>
        <name>Fe cation</name>
        <dbReference type="ChEBI" id="CHEBI:24875"/>
    </ligand>
</feature>
<evidence type="ECO:0000255" key="1">
    <source>
        <dbReference type="HAMAP-Rule" id="MF_01445"/>
    </source>
</evidence>
<name>TSAD_EDWI9</name>
<gene>
    <name evidence="1" type="primary">tsaD</name>
    <name type="synonym">gcp</name>
    <name type="ordered locus">NT01EI_0527</name>
</gene>